<proteinExistence type="inferred from homology"/>
<organism>
    <name type="scientific">Chlamydia abortus (strain DSM 27085 / S26/3)</name>
    <name type="common">Chlamydophila abortus</name>
    <dbReference type="NCBI Taxonomy" id="218497"/>
    <lineage>
        <taxon>Bacteria</taxon>
        <taxon>Pseudomonadati</taxon>
        <taxon>Chlamydiota</taxon>
        <taxon>Chlamydiia</taxon>
        <taxon>Chlamydiales</taxon>
        <taxon>Chlamydiaceae</taxon>
        <taxon>Chlamydia/Chlamydophila group</taxon>
        <taxon>Chlamydia</taxon>
    </lineage>
</organism>
<keyword id="KW-0030">Aminoacyl-tRNA synthetase</keyword>
<keyword id="KW-0067">ATP-binding</keyword>
<keyword id="KW-0963">Cytoplasm</keyword>
<keyword id="KW-0436">Ligase</keyword>
<keyword id="KW-0460">Magnesium</keyword>
<keyword id="KW-0479">Metal-binding</keyword>
<keyword id="KW-0547">Nucleotide-binding</keyword>
<keyword id="KW-0648">Protein biosynthesis</keyword>
<accession>Q5L5A8</accession>
<reference key="1">
    <citation type="journal article" date="2005" name="Genome Res.">
        <title>The Chlamydophila abortus genome sequence reveals an array of variable proteins that contribute to interspecies variation.</title>
        <authorList>
            <person name="Thomson N.R."/>
            <person name="Yeats C."/>
            <person name="Bell K."/>
            <person name="Holden M.T.G."/>
            <person name="Bentley S.D."/>
            <person name="Livingstone M."/>
            <person name="Cerdeno-Tarraga A.-M."/>
            <person name="Harris B."/>
            <person name="Doggett J."/>
            <person name="Ormond D."/>
            <person name="Mungall K."/>
            <person name="Clarke K."/>
            <person name="Feltwell T."/>
            <person name="Hance Z."/>
            <person name="Sanders M."/>
            <person name="Quail M.A."/>
            <person name="Price C."/>
            <person name="Barrell B.G."/>
            <person name="Parkhill J."/>
            <person name="Longbottom D."/>
        </authorList>
    </citation>
    <scope>NUCLEOTIDE SEQUENCE [LARGE SCALE GENOMIC DNA]</scope>
    <source>
        <strain>DSM 27085 / S26/3</strain>
    </source>
</reference>
<comment type="catalytic activity">
    <reaction evidence="1">
        <text>tRNA(Phe) + L-phenylalanine + ATP = L-phenylalanyl-tRNA(Phe) + AMP + diphosphate + H(+)</text>
        <dbReference type="Rhea" id="RHEA:19413"/>
        <dbReference type="Rhea" id="RHEA-COMP:9668"/>
        <dbReference type="Rhea" id="RHEA-COMP:9699"/>
        <dbReference type="ChEBI" id="CHEBI:15378"/>
        <dbReference type="ChEBI" id="CHEBI:30616"/>
        <dbReference type="ChEBI" id="CHEBI:33019"/>
        <dbReference type="ChEBI" id="CHEBI:58095"/>
        <dbReference type="ChEBI" id="CHEBI:78442"/>
        <dbReference type="ChEBI" id="CHEBI:78531"/>
        <dbReference type="ChEBI" id="CHEBI:456215"/>
        <dbReference type="EC" id="6.1.1.20"/>
    </reaction>
</comment>
<comment type="cofactor">
    <cofactor evidence="1">
        <name>Mg(2+)</name>
        <dbReference type="ChEBI" id="CHEBI:18420"/>
    </cofactor>
    <text evidence="1">Binds 2 magnesium ions per tetramer.</text>
</comment>
<comment type="subunit">
    <text evidence="1">Tetramer of two alpha and two beta subunits.</text>
</comment>
<comment type="subcellular location">
    <subcellularLocation>
        <location evidence="1">Cytoplasm</location>
    </subcellularLocation>
</comment>
<comment type="similarity">
    <text evidence="1">Belongs to the class-II aminoacyl-tRNA synthetase family. Phe-tRNA synthetase alpha subunit type 1 subfamily.</text>
</comment>
<sequence length="341" mass="39033">MAIQEELEATKQQFCAELSQVNSSKDLFDLKVRYLGKKGLFRCFADKLRECPADQKALMGASINDCKTYIENLIRDKNHAILLAEEAAEFLREKIDITLPGEPHCPGGKHIVKKVLDDVVDIFVHLGFCVREAPNIESEENNFSLLNFEEDHPARQMHDTFYLDPKTVLRTHTSNVQVRELRKGQPPIKVVAPGLCFRNEDISARSHVIFHQVEAFYLDRYVTLSDLTAMLTEFYHTFFEREIELRLRHSYFPFVEPGIEVDVSCECRQAGCSLCKHTGWLEVAGAGMIHPQVLRNSGFDPEIYTGYAVGMGIERLAMLQHGISDIRLFCENDLRFLQQFS</sequence>
<protein>
    <recommendedName>
        <fullName evidence="1">Phenylalanine--tRNA ligase alpha subunit</fullName>
        <ecNumber evidence="1">6.1.1.20</ecNumber>
    </recommendedName>
    <alternativeName>
        <fullName evidence="1">Phenylalanyl-tRNA synthetase alpha subunit</fullName>
        <shortName evidence="1">PheRS</shortName>
    </alternativeName>
</protein>
<feature type="chain" id="PRO_0000231973" description="Phenylalanine--tRNA ligase alpha subunit">
    <location>
        <begin position="1"/>
        <end position="341"/>
    </location>
</feature>
<feature type="binding site" evidence="1">
    <location>
        <position position="256"/>
    </location>
    <ligand>
        <name>Mg(2+)</name>
        <dbReference type="ChEBI" id="CHEBI:18420"/>
        <note>shared with beta subunit</note>
    </ligand>
</feature>
<name>SYFA_CHLAB</name>
<gene>
    <name evidence="1" type="primary">pheS</name>
    <name type="ordered locus">CAB736</name>
</gene>
<dbReference type="EC" id="6.1.1.20" evidence="1"/>
<dbReference type="EMBL" id="CR848038">
    <property type="protein sequence ID" value="CAH64183.1"/>
    <property type="molecule type" value="Genomic_DNA"/>
</dbReference>
<dbReference type="RefSeq" id="WP_011097303.1">
    <property type="nucleotide sequence ID" value="NC_004552.2"/>
</dbReference>
<dbReference type="SMR" id="Q5L5A8"/>
<dbReference type="KEGG" id="cab:CAB736"/>
<dbReference type="eggNOG" id="COG0016">
    <property type="taxonomic scope" value="Bacteria"/>
</dbReference>
<dbReference type="HOGENOM" id="CLU_025086_0_1_0"/>
<dbReference type="OrthoDB" id="9800719at2"/>
<dbReference type="Proteomes" id="UP000001012">
    <property type="component" value="Chromosome"/>
</dbReference>
<dbReference type="GO" id="GO:0005737">
    <property type="term" value="C:cytoplasm"/>
    <property type="evidence" value="ECO:0007669"/>
    <property type="project" value="UniProtKB-SubCell"/>
</dbReference>
<dbReference type="GO" id="GO:0005524">
    <property type="term" value="F:ATP binding"/>
    <property type="evidence" value="ECO:0007669"/>
    <property type="project" value="UniProtKB-UniRule"/>
</dbReference>
<dbReference type="GO" id="GO:0000287">
    <property type="term" value="F:magnesium ion binding"/>
    <property type="evidence" value="ECO:0007669"/>
    <property type="project" value="UniProtKB-UniRule"/>
</dbReference>
<dbReference type="GO" id="GO:0004826">
    <property type="term" value="F:phenylalanine-tRNA ligase activity"/>
    <property type="evidence" value="ECO:0007669"/>
    <property type="project" value="UniProtKB-UniRule"/>
</dbReference>
<dbReference type="GO" id="GO:0000049">
    <property type="term" value="F:tRNA binding"/>
    <property type="evidence" value="ECO:0007669"/>
    <property type="project" value="InterPro"/>
</dbReference>
<dbReference type="GO" id="GO:0006432">
    <property type="term" value="P:phenylalanyl-tRNA aminoacylation"/>
    <property type="evidence" value="ECO:0007669"/>
    <property type="project" value="UniProtKB-UniRule"/>
</dbReference>
<dbReference type="CDD" id="cd00496">
    <property type="entry name" value="PheRS_alpha_core"/>
    <property type="match status" value="1"/>
</dbReference>
<dbReference type="Gene3D" id="3.30.930.10">
    <property type="entry name" value="Bira Bifunctional Protein, Domain 2"/>
    <property type="match status" value="1"/>
</dbReference>
<dbReference type="HAMAP" id="MF_00281">
    <property type="entry name" value="Phe_tRNA_synth_alpha1"/>
    <property type="match status" value="1"/>
</dbReference>
<dbReference type="InterPro" id="IPR006195">
    <property type="entry name" value="aa-tRNA-synth_II"/>
</dbReference>
<dbReference type="InterPro" id="IPR045864">
    <property type="entry name" value="aa-tRNA-synth_II/BPL/LPL"/>
</dbReference>
<dbReference type="InterPro" id="IPR004529">
    <property type="entry name" value="Phe-tRNA-synth_IIc_asu"/>
</dbReference>
<dbReference type="InterPro" id="IPR004188">
    <property type="entry name" value="Phe-tRNA_ligase_II_N"/>
</dbReference>
<dbReference type="InterPro" id="IPR022911">
    <property type="entry name" value="Phe_tRNA_ligase_alpha1_bac"/>
</dbReference>
<dbReference type="InterPro" id="IPR002319">
    <property type="entry name" value="Phenylalanyl-tRNA_Synthase"/>
</dbReference>
<dbReference type="InterPro" id="IPR010978">
    <property type="entry name" value="tRNA-bd_arm"/>
</dbReference>
<dbReference type="NCBIfam" id="TIGR00468">
    <property type="entry name" value="pheS"/>
    <property type="match status" value="1"/>
</dbReference>
<dbReference type="PANTHER" id="PTHR11538:SF41">
    <property type="entry name" value="PHENYLALANINE--TRNA LIGASE, MITOCHONDRIAL"/>
    <property type="match status" value="1"/>
</dbReference>
<dbReference type="PANTHER" id="PTHR11538">
    <property type="entry name" value="PHENYLALANYL-TRNA SYNTHETASE"/>
    <property type="match status" value="1"/>
</dbReference>
<dbReference type="Pfam" id="PF02912">
    <property type="entry name" value="Phe_tRNA-synt_N"/>
    <property type="match status" value="1"/>
</dbReference>
<dbReference type="Pfam" id="PF01409">
    <property type="entry name" value="tRNA-synt_2d"/>
    <property type="match status" value="1"/>
</dbReference>
<dbReference type="SUPFAM" id="SSF55681">
    <property type="entry name" value="Class II aaRS and biotin synthetases"/>
    <property type="match status" value="1"/>
</dbReference>
<dbReference type="SUPFAM" id="SSF46589">
    <property type="entry name" value="tRNA-binding arm"/>
    <property type="match status" value="1"/>
</dbReference>
<dbReference type="PROSITE" id="PS50862">
    <property type="entry name" value="AA_TRNA_LIGASE_II"/>
    <property type="match status" value="1"/>
</dbReference>
<evidence type="ECO:0000255" key="1">
    <source>
        <dbReference type="HAMAP-Rule" id="MF_00281"/>
    </source>
</evidence>